<comment type="function">
    <text>Cytochrome b5 is a membrane bound hemoprotein which function as an electron carrier for several membrane bound oxygenases.</text>
</comment>
<comment type="subcellular location">
    <subcellularLocation>
        <location evidence="1">Endoplasmic reticulum membrane</location>
        <topology evidence="1">Single-pass membrane protein</topology>
        <orientation evidence="1">Cytoplasmic side</orientation>
    </subcellularLocation>
    <subcellularLocation>
        <location evidence="1">Microsome membrane</location>
        <topology evidence="1">Single-pass membrane protein</topology>
        <orientation evidence="1">Cytoplasmic side</orientation>
    </subcellularLocation>
</comment>
<comment type="similarity">
    <text evidence="4">Belongs to the cytochrome b5 family.</text>
</comment>
<sequence>MSSEDVKYFTRAEVAKNNTKDKNWFIIHNNVYDVTAFLNEHPGGEEVLIEQAGKDATEHFEDVGHSSDAREMMKQYKVGELVAEERSNVPEKSEPTWNTEQKTEESSMKSWLMPFVLGLVATLIYKFFFGTKSQ</sequence>
<proteinExistence type="evidence at protein level"/>
<accession>P49096</accession>
<organism>
    <name type="scientific">Musca domestica</name>
    <name type="common">House fly</name>
    <dbReference type="NCBI Taxonomy" id="7370"/>
    <lineage>
        <taxon>Eukaryota</taxon>
        <taxon>Metazoa</taxon>
        <taxon>Ecdysozoa</taxon>
        <taxon>Arthropoda</taxon>
        <taxon>Hexapoda</taxon>
        <taxon>Insecta</taxon>
        <taxon>Pterygota</taxon>
        <taxon>Neoptera</taxon>
        <taxon>Endopterygota</taxon>
        <taxon>Diptera</taxon>
        <taxon>Brachycera</taxon>
        <taxon>Muscomorpha</taxon>
        <taxon>Muscoidea</taxon>
        <taxon>Muscidae</taxon>
        <taxon>Musca</taxon>
    </lineage>
</organism>
<evidence type="ECO:0000250" key="1"/>
<evidence type="ECO:0000255" key="2"/>
<evidence type="ECO:0000255" key="3">
    <source>
        <dbReference type="PROSITE-ProRule" id="PRU00279"/>
    </source>
</evidence>
<evidence type="ECO:0000305" key="4"/>
<evidence type="ECO:0007829" key="5">
    <source>
        <dbReference type="PDB" id="2IBJ"/>
    </source>
</evidence>
<feature type="chain" id="PRO_0000166017" description="Cytochrome b5">
    <location>
        <begin position="1"/>
        <end position="134"/>
    </location>
</feature>
<feature type="transmembrane region" description="Helical" evidence="2">
    <location>
        <begin position="111"/>
        <end position="131"/>
    </location>
</feature>
<feature type="domain" description="Cytochrome b5 heme-binding" evidence="3">
    <location>
        <begin position="6"/>
        <end position="82"/>
    </location>
</feature>
<feature type="binding site" description="axial binding residue" evidence="3">
    <location>
        <position position="41"/>
    </location>
    <ligand>
        <name>heme</name>
        <dbReference type="ChEBI" id="CHEBI:30413"/>
    </ligand>
    <ligandPart>
        <name>Fe</name>
        <dbReference type="ChEBI" id="CHEBI:18248"/>
    </ligandPart>
</feature>
<feature type="binding site" description="axial binding residue" evidence="3">
    <location>
        <position position="65"/>
    </location>
    <ligand>
        <name>heme</name>
        <dbReference type="ChEBI" id="CHEBI:30413"/>
    </ligand>
    <ligandPart>
        <name>Fe</name>
        <dbReference type="ChEBI" id="CHEBI:18248"/>
    </ligandPart>
</feature>
<feature type="helix" evidence="5">
    <location>
        <begin position="11"/>
        <end position="15"/>
    </location>
</feature>
<feature type="strand" evidence="5">
    <location>
        <begin position="17"/>
        <end position="19"/>
    </location>
</feature>
<feature type="strand" evidence="5">
    <location>
        <begin position="22"/>
        <end position="27"/>
    </location>
</feature>
<feature type="strand" evidence="5">
    <location>
        <begin position="30"/>
        <end position="33"/>
    </location>
</feature>
<feature type="helix" evidence="5">
    <location>
        <begin position="35"/>
        <end position="37"/>
    </location>
</feature>
<feature type="turn" evidence="5">
    <location>
        <begin position="38"/>
        <end position="40"/>
    </location>
</feature>
<feature type="helix" evidence="5">
    <location>
        <begin position="46"/>
        <end position="49"/>
    </location>
</feature>
<feature type="turn" evidence="5">
    <location>
        <begin position="50"/>
        <end position="53"/>
    </location>
</feature>
<feature type="helix" evidence="5">
    <location>
        <begin position="57"/>
        <end position="63"/>
    </location>
</feature>
<feature type="helix" evidence="5">
    <location>
        <begin position="67"/>
        <end position="73"/>
    </location>
</feature>
<feature type="helix" evidence="5">
    <location>
        <begin position="74"/>
        <end position="76"/>
    </location>
</feature>
<feature type="strand" evidence="5">
    <location>
        <begin position="77"/>
        <end position="81"/>
    </location>
</feature>
<feature type="helix" evidence="5">
    <location>
        <begin position="83"/>
        <end position="85"/>
    </location>
</feature>
<keyword id="KW-0002">3D-structure</keyword>
<keyword id="KW-0249">Electron transport</keyword>
<keyword id="KW-0256">Endoplasmic reticulum</keyword>
<keyword id="KW-0349">Heme</keyword>
<keyword id="KW-0408">Iron</keyword>
<keyword id="KW-0472">Membrane</keyword>
<keyword id="KW-0479">Metal-binding</keyword>
<keyword id="KW-0492">Microsome</keyword>
<keyword id="KW-1185">Reference proteome</keyword>
<keyword id="KW-0812">Transmembrane</keyword>
<keyword id="KW-1133">Transmembrane helix</keyword>
<keyword id="KW-0813">Transport</keyword>
<dbReference type="EMBL" id="L38464">
    <property type="protein sequence ID" value="AAA56985.1"/>
    <property type="molecule type" value="mRNA"/>
</dbReference>
<dbReference type="RefSeq" id="NP_001274474.1">
    <property type="nucleotide sequence ID" value="NM_001287545.1"/>
</dbReference>
<dbReference type="PDB" id="2IBJ">
    <property type="method" value="X-ray"/>
    <property type="resolution" value="1.55 A"/>
    <property type="chains" value="A=1-88"/>
</dbReference>
<dbReference type="PDBsum" id="2IBJ"/>
<dbReference type="SMR" id="P49096"/>
<dbReference type="STRING" id="7370.P49096"/>
<dbReference type="EnsemblMetazoa" id="MDOA006030-RB">
    <property type="protein sequence ID" value="MDOA006030-PB"/>
    <property type="gene ID" value="MDOA006030"/>
</dbReference>
<dbReference type="EnsemblMetazoa" id="MDOA006030-RC">
    <property type="protein sequence ID" value="MDOA006030-PC"/>
    <property type="gene ID" value="MDOA006030"/>
</dbReference>
<dbReference type="GeneID" id="101896437"/>
<dbReference type="KEGG" id="mde:101896437"/>
<dbReference type="VEuPathDB" id="VectorBase:MDOA006030"/>
<dbReference type="VEuPathDB" id="VectorBase:MDOMA2_012292"/>
<dbReference type="eggNOG" id="KOG0537">
    <property type="taxonomic scope" value="Eukaryota"/>
</dbReference>
<dbReference type="OrthoDB" id="260519at2759"/>
<dbReference type="EvolutionaryTrace" id="P49096"/>
<dbReference type="Proteomes" id="UP000694905">
    <property type="component" value="Unplaced"/>
</dbReference>
<dbReference type="GO" id="GO:0005789">
    <property type="term" value="C:endoplasmic reticulum membrane"/>
    <property type="evidence" value="ECO:0007669"/>
    <property type="project" value="UniProtKB-SubCell"/>
</dbReference>
<dbReference type="GO" id="GO:0020037">
    <property type="term" value="F:heme binding"/>
    <property type="evidence" value="ECO:0007669"/>
    <property type="project" value="InterPro"/>
</dbReference>
<dbReference type="GO" id="GO:0046872">
    <property type="term" value="F:metal ion binding"/>
    <property type="evidence" value="ECO:0007669"/>
    <property type="project" value="UniProtKB-KW"/>
</dbReference>
<dbReference type="FunFam" id="3.10.120.10:FF:000002">
    <property type="entry name" value="Cytochrome b5 type B"/>
    <property type="match status" value="1"/>
</dbReference>
<dbReference type="Gene3D" id="3.10.120.10">
    <property type="entry name" value="Cytochrome b5-like heme/steroid binding domain"/>
    <property type="match status" value="1"/>
</dbReference>
<dbReference type="InterPro" id="IPR001199">
    <property type="entry name" value="Cyt_B5-like_heme/steroid-bd"/>
</dbReference>
<dbReference type="InterPro" id="IPR036400">
    <property type="entry name" value="Cyt_B5-like_heme/steroid_sf"/>
</dbReference>
<dbReference type="InterPro" id="IPR018506">
    <property type="entry name" value="Cyt_B5_heme-BS"/>
</dbReference>
<dbReference type="InterPro" id="IPR050668">
    <property type="entry name" value="Cytochrome_b5"/>
</dbReference>
<dbReference type="PANTHER" id="PTHR19359">
    <property type="entry name" value="CYTOCHROME B5"/>
    <property type="match status" value="1"/>
</dbReference>
<dbReference type="PANTHER" id="PTHR19359:SF150">
    <property type="entry name" value="CYTOCHROME B5"/>
    <property type="match status" value="1"/>
</dbReference>
<dbReference type="Pfam" id="PF00173">
    <property type="entry name" value="Cyt-b5"/>
    <property type="match status" value="1"/>
</dbReference>
<dbReference type="PRINTS" id="PR00363">
    <property type="entry name" value="CYTOCHROMEB5"/>
</dbReference>
<dbReference type="SMART" id="SM01117">
    <property type="entry name" value="Cyt-b5"/>
    <property type="match status" value="1"/>
</dbReference>
<dbReference type="SUPFAM" id="SSF55856">
    <property type="entry name" value="Cytochrome b5-like heme/steroid binding domain"/>
    <property type="match status" value="1"/>
</dbReference>
<dbReference type="PROSITE" id="PS00191">
    <property type="entry name" value="CYTOCHROME_B5_1"/>
    <property type="match status" value="1"/>
</dbReference>
<dbReference type="PROSITE" id="PS50255">
    <property type="entry name" value="CYTOCHROME_B5_2"/>
    <property type="match status" value="1"/>
</dbReference>
<name>CYB5_MUSDO</name>
<gene>
    <name type="primary">Cyt-b5</name>
</gene>
<protein>
    <recommendedName>
        <fullName>Cytochrome b5</fullName>
        <shortName>CYTB5</shortName>
    </recommendedName>
</protein>
<reference key="1">
    <citation type="submission" date="1994-12" db="EMBL/GenBank/DDBJ databases">
        <authorList>
            <person name="Guzov V."/>
            <person name="Feyereisen R."/>
        </authorList>
    </citation>
    <scope>NUCLEOTIDE SEQUENCE [MRNA]</scope>
    <source>
        <strain>Rutgers</strain>
    </source>
</reference>